<name>RISB_PICP2</name>
<dbReference type="EC" id="2.5.1.78" evidence="1"/>
<dbReference type="EMBL" id="CP000951">
    <property type="protein sequence ID" value="ACA98151.1"/>
    <property type="molecule type" value="Genomic_DNA"/>
</dbReference>
<dbReference type="RefSeq" id="WP_012305775.1">
    <property type="nucleotide sequence ID" value="NZ_JAHHPU010000005.1"/>
</dbReference>
<dbReference type="SMR" id="B1XLJ1"/>
<dbReference type="STRING" id="32049.SYNPCC7002_A0136"/>
<dbReference type="KEGG" id="syp:SYNPCC7002_A0136"/>
<dbReference type="eggNOG" id="COG0054">
    <property type="taxonomic scope" value="Bacteria"/>
</dbReference>
<dbReference type="HOGENOM" id="CLU_089358_1_0_3"/>
<dbReference type="UniPathway" id="UPA00275">
    <property type="reaction ID" value="UER00404"/>
</dbReference>
<dbReference type="Proteomes" id="UP000001688">
    <property type="component" value="Chromosome"/>
</dbReference>
<dbReference type="GO" id="GO:0005829">
    <property type="term" value="C:cytosol"/>
    <property type="evidence" value="ECO:0007669"/>
    <property type="project" value="TreeGrafter"/>
</dbReference>
<dbReference type="GO" id="GO:0009349">
    <property type="term" value="C:riboflavin synthase complex"/>
    <property type="evidence" value="ECO:0007669"/>
    <property type="project" value="InterPro"/>
</dbReference>
<dbReference type="GO" id="GO:0000906">
    <property type="term" value="F:6,7-dimethyl-8-ribityllumazine synthase activity"/>
    <property type="evidence" value="ECO:0007669"/>
    <property type="project" value="UniProtKB-UniRule"/>
</dbReference>
<dbReference type="GO" id="GO:0009231">
    <property type="term" value="P:riboflavin biosynthetic process"/>
    <property type="evidence" value="ECO:0007669"/>
    <property type="project" value="UniProtKB-UniRule"/>
</dbReference>
<dbReference type="CDD" id="cd09209">
    <property type="entry name" value="Lumazine_synthase-I"/>
    <property type="match status" value="1"/>
</dbReference>
<dbReference type="FunFam" id="3.40.50.960:FF:000001">
    <property type="entry name" value="6,7-dimethyl-8-ribityllumazine synthase"/>
    <property type="match status" value="1"/>
</dbReference>
<dbReference type="Gene3D" id="3.40.50.960">
    <property type="entry name" value="Lumazine/riboflavin synthase"/>
    <property type="match status" value="1"/>
</dbReference>
<dbReference type="HAMAP" id="MF_00178">
    <property type="entry name" value="Lumazine_synth"/>
    <property type="match status" value="1"/>
</dbReference>
<dbReference type="InterPro" id="IPR034964">
    <property type="entry name" value="LS"/>
</dbReference>
<dbReference type="InterPro" id="IPR002180">
    <property type="entry name" value="LS/RS"/>
</dbReference>
<dbReference type="InterPro" id="IPR036467">
    <property type="entry name" value="LS/RS_sf"/>
</dbReference>
<dbReference type="NCBIfam" id="TIGR00114">
    <property type="entry name" value="lumazine-synth"/>
    <property type="match status" value="1"/>
</dbReference>
<dbReference type="PANTHER" id="PTHR21058:SF0">
    <property type="entry name" value="6,7-DIMETHYL-8-RIBITYLLUMAZINE SYNTHASE"/>
    <property type="match status" value="1"/>
</dbReference>
<dbReference type="PANTHER" id="PTHR21058">
    <property type="entry name" value="6,7-DIMETHYL-8-RIBITYLLUMAZINE SYNTHASE DMRL SYNTHASE LUMAZINE SYNTHASE"/>
    <property type="match status" value="1"/>
</dbReference>
<dbReference type="Pfam" id="PF00885">
    <property type="entry name" value="DMRL_synthase"/>
    <property type="match status" value="1"/>
</dbReference>
<dbReference type="SUPFAM" id="SSF52121">
    <property type="entry name" value="Lumazine synthase"/>
    <property type="match status" value="1"/>
</dbReference>
<feature type="chain" id="PRO_1000098240" description="6,7-dimethyl-8-ribityllumazine synthase">
    <location>
        <begin position="1"/>
        <end position="158"/>
    </location>
</feature>
<feature type="active site" description="Proton donor" evidence="1">
    <location>
        <position position="94"/>
    </location>
</feature>
<feature type="binding site" evidence="1">
    <location>
        <position position="24"/>
    </location>
    <ligand>
        <name>5-amino-6-(D-ribitylamino)uracil</name>
        <dbReference type="ChEBI" id="CHEBI:15934"/>
    </ligand>
</feature>
<feature type="binding site" evidence="1">
    <location>
        <begin position="62"/>
        <end position="64"/>
    </location>
    <ligand>
        <name>5-amino-6-(D-ribitylamino)uracil</name>
        <dbReference type="ChEBI" id="CHEBI:15934"/>
    </ligand>
</feature>
<feature type="binding site" evidence="1">
    <location>
        <begin position="86"/>
        <end position="88"/>
    </location>
    <ligand>
        <name>5-amino-6-(D-ribitylamino)uracil</name>
        <dbReference type="ChEBI" id="CHEBI:15934"/>
    </ligand>
</feature>
<feature type="binding site" evidence="1">
    <location>
        <begin position="91"/>
        <end position="92"/>
    </location>
    <ligand>
        <name>(2S)-2-hydroxy-3-oxobutyl phosphate</name>
        <dbReference type="ChEBI" id="CHEBI:58830"/>
    </ligand>
</feature>
<feature type="binding site" evidence="1">
    <location>
        <position position="119"/>
    </location>
    <ligand>
        <name>5-amino-6-(D-ribitylamino)uracil</name>
        <dbReference type="ChEBI" id="CHEBI:15934"/>
    </ligand>
</feature>
<feature type="binding site" evidence="1">
    <location>
        <position position="133"/>
    </location>
    <ligand>
        <name>(2S)-2-hydroxy-3-oxobutyl phosphate</name>
        <dbReference type="ChEBI" id="CHEBI:58830"/>
    </ligand>
</feature>
<accession>B1XLJ1</accession>
<reference key="1">
    <citation type="submission" date="2008-02" db="EMBL/GenBank/DDBJ databases">
        <title>Complete sequence of Synechococcus sp. PCC 7002.</title>
        <authorList>
            <person name="Li T."/>
            <person name="Zhao J."/>
            <person name="Zhao C."/>
            <person name="Liu Z."/>
            <person name="Zhao F."/>
            <person name="Marquardt J."/>
            <person name="Nomura C.T."/>
            <person name="Persson S."/>
            <person name="Detter J.C."/>
            <person name="Richardson P.M."/>
            <person name="Lanz C."/>
            <person name="Schuster S.C."/>
            <person name="Wang J."/>
            <person name="Li S."/>
            <person name="Huang X."/>
            <person name="Cai T."/>
            <person name="Yu Z."/>
            <person name="Luo J."/>
            <person name="Zhao J."/>
            <person name="Bryant D.A."/>
        </authorList>
    </citation>
    <scope>NUCLEOTIDE SEQUENCE [LARGE SCALE GENOMIC DNA]</scope>
    <source>
        <strain>ATCC 27264 / PCC 7002 / PR-6</strain>
    </source>
</reference>
<protein>
    <recommendedName>
        <fullName evidence="1">6,7-dimethyl-8-ribityllumazine synthase</fullName>
        <shortName evidence="1">DMRL synthase</shortName>
        <shortName evidence="1">LS</shortName>
        <shortName evidence="1">Lumazine synthase</shortName>
        <ecNumber evidence="1">2.5.1.78</ecNumber>
    </recommendedName>
</protein>
<gene>
    <name evidence="1" type="primary">ribH</name>
    <name type="ordered locus">SYNPCC7002_A0136</name>
</gene>
<proteinExistence type="inferred from homology"/>
<sequence length="158" mass="16874">MATFEGTYNDNTQALKLAIVIGRFNDLVTSKLLAGCQDCLRRHGVNTDPEGAQIDYIWVPGCFEISLVAKKLADSGKYDAIICLGAVIRGDTPHFDYVAAEVSKGVAAAAFQTGVPVIFGVLTTDTMQQALERAGIKNNLGWGYALSALEMASLMGKI</sequence>
<evidence type="ECO:0000255" key="1">
    <source>
        <dbReference type="HAMAP-Rule" id="MF_00178"/>
    </source>
</evidence>
<comment type="function">
    <text evidence="1">Catalyzes the formation of 6,7-dimethyl-8-ribityllumazine by condensation of 5-amino-6-(D-ribitylamino)uracil with 3,4-dihydroxy-2-butanone 4-phosphate. This is the penultimate step in the biosynthesis of riboflavin.</text>
</comment>
<comment type="catalytic activity">
    <reaction evidence="1">
        <text>(2S)-2-hydroxy-3-oxobutyl phosphate + 5-amino-6-(D-ribitylamino)uracil = 6,7-dimethyl-8-(1-D-ribityl)lumazine + phosphate + 2 H2O + H(+)</text>
        <dbReference type="Rhea" id="RHEA:26152"/>
        <dbReference type="ChEBI" id="CHEBI:15377"/>
        <dbReference type="ChEBI" id="CHEBI:15378"/>
        <dbReference type="ChEBI" id="CHEBI:15934"/>
        <dbReference type="ChEBI" id="CHEBI:43474"/>
        <dbReference type="ChEBI" id="CHEBI:58201"/>
        <dbReference type="ChEBI" id="CHEBI:58830"/>
        <dbReference type="EC" id="2.5.1.78"/>
    </reaction>
</comment>
<comment type="pathway">
    <text evidence="1">Cofactor biosynthesis; riboflavin biosynthesis; riboflavin from 2-hydroxy-3-oxobutyl phosphate and 5-amino-6-(D-ribitylamino)uracil: step 1/2.</text>
</comment>
<comment type="similarity">
    <text evidence="1">Belongs to the DMRL synthase family.</text>
</comment>
<organism>
    <name type="scientific">Picosynechococcus sp. (strain ATCC 27264 / PCC 7002 / PR-6)</name>
    <name type="common">Agmenellum quadruplicatum</name>
    <dbReference type="NCBI Taxonomy" id="32049"/>
    <lineage>
        <taxon>Bacteria</taxon>
        <taxon>Bacillati</taxon>
        <taxon>Cyanobacteriota</taxon>
        <taxon>Cyanophyceae</taxon>
        <taxon>Oscillatoriophycideae</taxon>
        <taxon>Chroococcales</taxon>
        <taxon>Geminocystaceae</taxon>
        <taxon>Picosynechococcus</taxon>
    </lineage>
</organism>
<keyword id="KW-1185">Reference proteome</keyword>
<keyword id="KW-0686">Riboflavin biosynthesis</keyword>
<keyword id="KW-0808">Transferase</keyword>